<sequence>MPSTIEAIYIILIAGELTIGIWGNGFIVLVNCIDWLKRRDVSLIDIILISLAISRICLLCVISLDGFFILLFPGTYDINVLESIMDAVWTFANNSSLWFTSCLSIFYLLKIANISHPFFFWLKLKINKVILAILLGSFLISLIISFPINGXWYHLFKVSHEENITWAFKVSTIPGAFKQLTLNLGAMVPFMLCLISFFLLLFSLVRHTKQIQLHATGLRDPSTEAHMRAIKAVIIFLLLLIVYYPVFLVMTSSTLIPQGKLVLMIGDIVTVIFPSSHSFILIMGNSKLREAFLKMLRFVKGFLRRRKPFGP</sequence>
<comment type="function">
    <text evidence="1">Gustducin-coupled receptor implicated in the perception of bitter compounds in the oral cavity and the gastrointestinal tract. Signals through PLCB2 and the calcium-regulated cation channel TRPM5 (By similarity).</text>
</comment>
<comment type="subcellular location">
    <subcellularLocation>
        <location>Membrane</location>
        <topology>Multi-pass membrane protein</topology>
    </subcellularLocation>
</comment>
<comment type="miscellaneous">
    <text>Several bitter taste receptors are expressed in a single taste receptor cell.</text>
</comment>
<comment type="similarity">
    <text evidence="3">Belongs to the G-protein coupled receptor T2R family.</text>
</comment>
<protein>
    <recommendedName>
        <fullName>Taste receptor type 2 member 9</fullName>
        <shortName>T2R9</shortName>
    </recommendedName>
</protein>
<name>TA2R9_PAPHA</name>
<evidence type="ECO:0000250" key="1"/>
<evidence type="ECO:0000255" key="2"/>
<evidence type="ECO:0000305" key="3"/>
<organism>
    <name type="scientific">Papio hamadryas</name>
    <name type="common">Hamadryas baboon</name>
    <dbReference type="NCBI Taxonomy" id="9557"/>
    <lineage>
        <taxon>Eukaryota</taxon>
        <taxon>Metazoa</taxon>
        <taxon>Chordata</taxon>
        <taxon>Craniata</taxon>
        <taxon>Vertebrata</taxon>
        <taxon>Euteleostomi</taxon>
        <taxon>Mammalia</taxon>
        <taxon>Eutheria</taxon>
        <taxon>Euarchontoglires</taxon>
        <taxon>Primates</taxon>
        <taxon>Haplorrhini</taxon>
        <taxon>Catarrhini</taxon>
        <taxon>Cercopithecidae</taxon>
        <taxon>Cercopithecinae</taxon>
        <taxon>Papio</taxon>
    </lineage>
</organism>
<accession>Q646G5</accession>
<dbReference type="EMBL" id="AY724816">
    <property type="protein sequence ID" value="AAU21054.1"/>
    <property type="molecule type" value="Genomic_DNA"/>
</dbReference>
<dbReference type="GlyCosmos" id="Q646G5">
    <property type="glycosylation" value="1 site, No reported glycans"/>
</dbReference>
<dbReference type="GO" id="GO:0005886">
    <property type="term" value="C:plasma membrane"/>
    <property type="evidence" value="ECO:0007669"/>
    <property type="project" value="UniProtKB-ARBA"/>
</dbReference>
<dbReference type="GO" id="GO:0033038">
    <property type="term" value="F:bitter taste receptor activity"/>
    <property type="evidence" value="ECO:0007669"/>
    <property type="project" value="InterPro"/>
</dbReference>
<dbReference type="GO" id="GO:0004930">
    <property type="term" value="F:G protein-coupled receptor activity"/>
    <property type="evidence" value="ECO:0007669"/>
    <property type="project" value="UniProtKB-KW"/>
</dbReference>
<dbReference type="FunFam" id="1.20.1070.10:FF:000042">
    <property type="entry name" value="Taste receptor type 2 member 7"/>
    <property type="match status" value="1"/>
</dbReference>
<dbReference type="Gene3D" id="1.20.1070.10">
    <property type="entry name" value="Rhodopsin 7-helix transmembrane proteins"/>
    <property type="match status" value="1"/>
</dbReference>
<dbReference type="InterPro" id="IPR017452">
    <property type="entry name" value="GPCR_Rhodpsn_7TM"/>
</dbReference>
<dbReference type="InterPro" id="IPR007960">
    <property type="entry name" value="TAS2R"/>
</dbReference>
<dbReference type="PANTHER" id="PTHR11394">
    <property type="entry name" value="TASTE RECEPTOR TYPE 2"/>
    <property type="match status" value="1"/>
</dbReference>
<dbReference type="PANTHER" id="PTHR11394:SF29">
    <property type="entry name" value="TASTE RECEPTOR TYPE 2 MEMBER 9"/>
    <property type="match status" value="1"/>
</dbReference>
<dbReference type="Pfam" id="PF05296">
    <property type="entry name" value="TAS2R"/>
    <property type="match status" value="1"/>
</dbReference>
<dbReference type="SUPFAM" id="SSF81321">
    <property type="entry name" value="Family A G protein-coupled receptor-like"/>
    <property type="match status" value="1"/>
</dbReference>
<dbReference type="PROSITE" id="PS50262">
    <property type="entry name" value="G_PROTEIN_RECEP_F1_2"/>
    <property type="match status" value="1"/>
</dbReference>
<keyword id="KW-0297">G-protein coupled receptor</keyword>
<keyword id="KW-0325">Glycoprotein</keyword>
<keyword id="KW-0472">Membrane</keyword>
<keyword id="KW-0675">Receptor</keyword>
<keyword id="KW-0716">Sensory transduction</keyword>
<keyword id="KW-0919">Taste</keyword>
<keyword id="KW-0807">Transducer</keyword>
<keyword id="KW-0812">Transmembrane</keyword>
<keyword id="KW-1133">Transmembrane helix</keyword>
<gene>
    <name type="primary">TAS2R9</name>
</gene>
<feature type="chain" id="PRO_0000082235" description="Taste receptor type 2 member 9">
    <location>
        <begin position="1"/>
        <end position="311"/>
    </location>
</feature>
<feature type="topological domain" description="Extracellular" evidence="2">
    <location>
        <begin position="1"/>
        <end position="9"/>
    </location>
</feature>
<feature type="transmembrane region" description="Helical; Name=1" evidence="2">
    <location>
        <begin position="10"/>
        <end position="32"/>
    </location>
</feature>
<feature type="topological domain" description="Cytoplasmic" evidence="2">
    <location>
        <begin position="33"/>
        <end position="52"/>
    </location>
</feature>
<feature type="transmembrane region" description="Helical; Name=2" evidence="2">
    <location>
        <begin position="53"/>
        <end position="72"/>
    </location>
</feature>
<feature type="topological domain" description="Extracellular" evidence="2">
    <location>
        <begin position="73"/>
        <end position="86"/>
    </location>
</feature>
<feature type="transmembrane region" description="Helical; Name=3" evidence="2">
    <location>
        <begin position="87"/>
        <end position="109"/>
    </location>
</feature>
<feature type="topological domain" description="Cytoplasmic" evidence="2">
    <location>
        <begin position="110"/>
        <end position="128"/>
    </location>
</feature>
<feature type="transmembrane region" description="Helical; Name=4" evidence="2">
    <location>
        <begin position="129"/>
        <end position="146"/>
    </location>
</feature>
<feature type="topological domain" description="Extracellular" evidence="2">
    <location>
        <begin position="147"/>
        <end position="179"/>
    </location>
</feature>
<feature type="transmembrane region" description="Helical; Name=5" evidence="2">
    <location>
        <begin position="180"/>
        <end position="202"/>
    </location>
</feature>
<feature type="topological domain" description="Cytoplasmic" evidence="2">
    <location>
        <begin position="203"/>
        <end position="233"/>
    </location>
</feature>
<feature type="transmembrane region" description="Helical; Name=6" evidence="2">
    <location>
        <begin position="234"/>
        <end position="256"/>
    </location>
</feature>
<feature type="topological domain" description="Extracellular" evidence="2">
    <location>
        <begin position="257"/>
        <end position="260"/>
    </location>
</feature>
<feature type="transmembrane region" description="Helical; Name=7" evidence="2">
    <location>
        <begin position="261"/>
        <end position="283"/>
    </location>
</feature>
<feature type="topological domain" description="Cytoplasmic" evidence="2">
    <location>
        <begin position="284"/>
        <end position="311"/>
    </location>
</feature>
<feature type="glycosylation site" description="N-linked (GlcNAc...) asparagine" evidence="2">
    <location>
        <position position="163"/>
    </location>
</feature>
<reference key="1">
    <citation type="journal article" date="2005" name="Mol. Biol. Evol.">
        <title>Evolution of bitter taste receptors in humans and apes.</title>
        <authorList>
            <person name="Fischer A."/>
            <person name="Gilad Y."/>
            <person name="Man O."/>
            <person name="Paeaebo S."/>
        </authorList>
    </citation>
    <scope>NUCLEOTIDE SEQUENCE [GENOMIC DNA]</scope>
</reference>
<proteinExistence type="inferred from homology"/>